<comment type="similarity">
    <text evidence="1">Belongs to the bacterial ribosomal protein bL28 family.</text>
</comment>
<protein>
    <recommendedName>
        <fullName evidence="1">Large ribosomal subunit protein bL28</fullName>
    </recommendedName>
    <alternativeName>
        <fullName evidence="2">50S ribosomal protein L28</fullName>
    </alternativeName>
</protein>
<dbReference type="EMBL" id="CP000009">
    <property type="protein sequence ID" value="AAW59901.1"/>
    <property type="molecule type" value="Genomic_DNA"/>
</dbReference>
<dbReference type="RefSeq" id="WP_011251705.1">
    <property type="nucleotide sequence ID" value="NC_006677.1"/>
</dbReference>
<dbReference type="SMR" id="Q5FUP5"/>
<dbReference type="STRING" id="290633.GOX0106"/>
<dbReference type="KEGG" id="gox:GOX0106"/>
<dbReference type="eggNOG" id="COG0227">
    <property type="taxonomic scope" value="Bacteria"/>
</dbReference>
<dbReference type="HOGENOM" id="CLU_064548_4_2_5"/>
<dbReference type="Proteomes" id="UP000006375">
    <property type="component" value="Chromosome"/>
</dbReference>
<dbReference type="GO" id="GO:0022625">
    <property type="term" value="C:cytosolic large ribosomal subunit"/>
    <property type="evidence" value="ECO:0007669"/>
    <property type="project" value="TreeGrafter"/>
</dbReference>
<dbReference type="GO" id="GO:0003735">
    <property type="term" value="F:structural constituent of ribosome"/>
    <property type="evidence" value="ECO:0007669"/>
    <property type="project" value="InterPro"/>
</dbReference>
<dbReference type="GO" id="GO:0006412">
    <property type="term" value="P:translation"/>
    <property type="evidence" value="ECO:0007669"/>
    <property type="project" value="UniProtKB-UniRule"/>
</dbReference>
<dbReference type="Gene3D" id="2.30.170.40">
    <property type="entry name" value="Ribosomal protein L28/L24"/>
    <property type="match status" value="1"/>
</dbReference>
<dbReference type="HAMAP" id="MF_00373">
    <property type="entry name" value="Ribosomal_bL28"/>
    <property type="match status" value="1"/>
</dbReference>
<dbReference type="InterPro" id="IPR026569">
    <property type="entry name" value="Ribosomal_bL28"/>
</dbReference>
<dbReference type="InterPro" id="IPR034704">
    <property type="entry name" value="Ribosomal_bL28/bL31-like_sf"/>
</dbReference>
<dbReference type="InterPro" id="IPR001383">
    <property type="entry name" value="Ribosomal_bL28_bact-type"/>
</dbReference>
<dbReference type="InterPro" id="IPR037147">
    <property type="entry name" value="Ribosomal_bL28_sf"/>
</dbReference>
<dbReference type="NCBIfam" id="TIGR00009">
    <property type="entry name" value="L28"/>
    <property type="match status" value="1"/>
</dbReference>
<dbReference type="PANTHER" id="PTHR13528">
    <property type="entry name" value="39S RIBOSOMAL PROTEIN L28, MITOCHONDRIAL"/>
    <property type="match status" value="1"/>
</dbReference>
<dbReference type="PANTHER" id="PTHR13528:SF2">
    <property type="entry name" value="LARGE RIBOSOMAL SUBUNIT PROTEIN BL28M"/>
    <property type="match status" value="1"/>
</dbReference>
<dbReference type="Pfam" id="PF00830">
    <property type="entry name" value="Ribosomal_L28"/>
    <property type="match status" value="1"/>
</dbReference>
<dbReference type="SUPFAM" id="SSF143800">
    <property type="entry name" value="L28p-like"/>
    <property type="match status" value="1"/>
</dbReference>
<name>RL28_GLUOX</name>
<evidence type="ECO:0000255" key="1">
    <source>
        <dbReference type="HAMAP-Rule" id="MF_00373"/>
    </source>
</evidence>
<evidence type="ECO:0000305" key="2"/>
<sequence>MSRRCQITGKGVLTGNNVSHANNKSRRRFLPNLQETTLISDILGASVRMRLSTDGIRTVEHNGGLDSFLLGTPNRKLPTEAQVIKRRILRVQERKAAQTA</sequence>
<keyword id="KW-1185">Reference proteome</keyword>
<keyword id="KW-0687">Ribonucleoprotein</keyword>
<keyword id="KW-0689">Ribosomal protein</keyword>
<proteinExistence type="inferred from homology"/>
<organism>
    <name type="scientific">Gluconobacter oxydans (strain 621H)</name>
    <name type="common">Gluconobacter suboxydans</name>
    <dbReference type="NCBI Taxonomy" id="290633"/>
    <lineage>
        <taxon>Bacteria</taxon>
        <taxon>Pseudomonadati</taxon>
        <taxon>Pseudomonadota</taxon>
        <taxon>Alphaproteobacteria</taxon>
        <taxon>Acetobacterales</taxon>
        <taxon>Acetobacteraceae</taxon>
        <taxon>Gluconobacter</taxon>
    </lineage>
</organism>
<feature type="chain" id="PRO_0000178478" description="Large ribosomal subunit protein bL28">
    <location>
        <begin position="1"/>
        <end position="100"/>
    </location>
</feature>
<gene>
    <name evidence="1" type="primary">rpmB</name>
    <name type="ordered locus">GOX0106</name>
</gene>
<accession>Q5FUP5</accession>
<reference key="1">
    <citation type="journal article" date="2005" name="Nat. Biotechnol.">
        <title>Complete genome sequence of the acetic acid bacterium Gluconobacter oxydans.</title>
        <authorList>
            <person name="Prust C."/>
            <person name="Hoffmeister M."/>
            <person name="Liesegang H."/>
            <person name="Wiezer A."/>
            <person name="Fricke W.F."/>
            <person name="Ehrenreich A."/>
            <person name="Gottschalk G."/>
            <person name="Deppenmeier U."/>
        </authorList>
    </citation>
    <scope>NUCLEOTIDE SEQUENCE [LARGE SCALE GENOMIC DNA]</scope>
    <source>
        <strain>621H</strain>
    </source>
</reference>